<protein>
    <recommendedName>
        <fullName>Polygalacturonase non-catalytic subunit AroGP2</fullName>
    </recommendedName>
</protein>
<comment type="function">
    <text evidence="1">Non-catalytic subunit of polygalacturonase.</text>
</comment>
<comment type="subunit">
    <text evidence="1">Interacts with polygalacturonase to form heterodimers.</text>
</comment>
<comment type="subcellular location">
    <subcellularLocation>
        <location evidence="1">Secreted</location>
        <location evidence="1">Extracellular space</location>
        <location evidence="1">Apoplast</location>
    </subcellularLocation>
    <subcellularLocation>
        <location evidence="1">Secreted</location>
        <location evidence="1">Cell wall</location>
    </subcellularLocation>
    <text evidence="1">Associated to the cell wall.</text>
</comment>
<evidence type="ECO:0000250" key="1"/>
<evidence type="ECO:0000255" key="2"/>
<evidence type="ECO:0000255" key="3">
    <source>
        <dbReference type="PROSITE-ProRule" id="PRU00604"/>
    </source>
</evidence>
<evidence type="ECO:0000256" key="4">
    <source>
        <dbReference type="SAM" id="MobiDB-lite"/>
    </source>
</evidence>
<proteinExistence type="inferred from homology"/>
<feature type="signal peptide" evidence="2">
    <location>
        <begin position="1"/>
        <end position="27"/>
    </location>
</feature>
<feature type="propeptide" id="PRO_0000042962" evidence="1">
    <location>
        <begin position="28"/>
        <end position="109"/>
    </location>
</feature>
<feature type="chain" id="PRO_0000042963" description="Polygalacturonase non-catalytic subunit AroGP2">
    <location>
        <begin position="110"/>
        <end status="unknown"/>
    </location>
</feature>
<feature type="propeptide" id="PRO_0000042964" evidence="1">
    <location>
        <begin status="unknown"/>
        <end position="629"/>
    </location>
</feature>
<feature type="domain" description="BURP" evidence="3">
    <location>
        <begin position="414"/>
        <end position="628"/>
    </location>
</feature>
<feature type="region of interest" description="Disordered" evidence="4">
    <location>
        <begin position="267"/>
        <end position="305"/>
    </location>
</feature>
<feature type="compositionally biased region" description="Polar residues" evidence="4">
    <location>
        <begin position="267"/>
        <end position="293"/>
    </location>
</feature>
<feature type="glycosylation site" description="N-linked (GlcNAc...) asparagine" evidence="2">
    <location>
        <position position="125"/>
    </location>
</feature>
<feature type="glycosylation site" description="N-linked (GlcNAc...) asparagine" evidence="2">
    <location>
        <position position="143"/>
    </location>
</feature>
<feature type="glycosylation site" description="N-linked (GlcNAc...) asparagine" evidence="2">
    <location>
        <position position="255"/>
    </location>
</feature>
<feature type="glycosylation site" description="N-linked (GlcNAc...) asparagine" evidence="2">
    <location>
        <position position="277"/>
    </location>
</feature>
<feature type="glycosylation site" description="N-linked (GlcNAc...) asparagine" evidence="2">
    <location>
        <position position="333"/>
    </location>
</feature>
<feature type="glycosylation site" description="N-linked (GlcNAc...) asparagine" evidence="2">
    <location>
        <position position="368"/>
    </location>
</feature>
<feature type="glycosylation site" description="N-linked (GlcNAc...) asparagine" evidence="2">
    <location>
        <position position="386"/>
    </location>
</feature>
<gene>
    <name type="primary">GP2</name>
</gene>
<keyword id="KW-0052">Apoplast</keyword>
<keyword id="KW-0134">Cell wall</keyword>
<keyword id="KW-0961">Cell wall biogenesis/degradation</keyword>
<keyword id="KW-0325">Glycoprotein</keyword>
<keyword id="KW-1185">Reference proteome</keyword>
<keyword id="KW-0964">Secreted</keyword>
<keyword id="KW-0732">Signal</keyword>
<dbReference type="EMBL" id="U64789">
    <property type="protein sequence ID" value="AAB39556.1"/>
    <property type="molecule type" value="Genomic_DNA"/>
</dbReference>
<dbReference type="PIR" id="T07426">
    <property type="entry name" value="T07426"/>
</dbReference>
<dbReference type="RefSeq" id="NP_001297245.1">
    <property type="nucleotide sequence ID" value="NM_001310316.1"/>
</dbReference>
<dbReference type="FunCoup" id="P93217">
    <property type="interactions" value="734"/>
</dbReference>
<dbReference type="STRING" id="4081.P93217"/>
<dbReference type="GlyCosmos" id="P93217">
    <property type="glycosylation" value="7 sites, No reported glycans"/>
</dbReference>
<dbReference type="PaxDb" id="4081-Solyc05g005550.2.1"/>
<dbReference type="EnsemblPlants" id="Solyc05g005550.3.1">
    <property type="protein sequence ID" value="Solyc05g005550.3.1"/>
    <property type="gene ID" value="Solyc05g005550.3"/>
</dbReference>
<dbReference type="GeneID" id="101252080"/>
<dbReference type="Gramene" id="Solyc05g005550.3.1">
    <property type="protein sequence ID" value="Solyc05g005550.3.1"/>
    <property type="gene ID" value="Solyc05g005550.3"/>
</dbReference>
<dbReference type="KEGG" id="sly:101252080"/>
<dbReference type="eggNOG" id="ENOG502QT2V">
    <property type="taxonomic scope" value="Eukaryota"/>
</dbReference>
<dbReference type="HOGENOM" id="CLU_011822_5_0_1"/>
<dbReference type="InParanoid" id="P93217"/>
<dbReference type="OMA" id="DQRNFTN"/>
<dbReference type="OrthoDB" id="773062at2759"/>
<dbReference type="PhylomeDB" id="P93217"/>
<dbReference type="Proteomes" id="UP000004994">
    <property type="component" value="Chromosome 5"/>
</dbReference>
<dbReference type="GO" id="GO:0048046">
    <property type="term" value="C:apoplast"/>
    <property type="evidence" value="ECO:0007669"/>
    <property type="project" value="UniProtKB-SubCell"/>
</dbReference>
<dbReference type="GO" id="GO:0071555">
    <property type="term" value="P:cell wall organization"/>
    <property type="evidence" value="ECO:0007669"/>
    <property type="project" value="UniProtKB-KW"/>
</dbReference>
<dbReference type="InterPro" id="IPR004873">
    <property type="entry name" value="BURP_dom"/>
</dbReference>
<dbReference type="InterPro" id="IPR051897">
    <property type="entry name" value="PG-associated_BURP"/>
</dbReference>
<dbReference type="PANTHER" id="PTHR31458">
    <property type="entry name" value="POLYGALACTURONASE 1 BETA-LIKE PROTEIN 2"/>
    <property type="match status" value="1"/>
</dbReference>
<dbReference type="PANTHER" id="PTHR31458:SF15">
    <property type="entry name" value="POLYGALACTURONASE NON-CATALYTIC SUBUNIT AROGP2"/>
    <property type="match status" value="1"/>
</dbReference>
<dbReference type="Pfam" id="PF03181">
    <property type="entry name" value="BURP"/>
    <property type="match status" value="1"/>
</dbReference>
<dbReference type="SMART" id="SM01045">
    <property type="entry name" value="BURP"/>
    <property type="match status" value="1"/>
</dbReference>
<dbReference type="PROSITE" id="PS51277">
    <property type="entry name" value="BURP"/>
    <property type="match status" value="1"/>
</dbReference>
<reference key="1">
    <citation type="submission" date="1996-07" db="EMBL/GenBank/DDBJ databases">
        <authorList>
            <person name="Watson C.F."/>
            <person name="Liu J."/>
            <person name="Schuchman D."/>
            <person name="Dellapenna D."/>
        </authorList>
    </citation>
    <scope>NUCLEOTIDE SEQUENCE [GENOMIC DNA]</scope>
    <source>
        <strain>cv. VFNT Cherry</strain>
    </source>
</reference>
<sequence length="629" mass="69069">MHNKILVSSYILLVLLFSLSSFNIVVAKDGDESGNPFTPKGYVIRYWNKHVSNDLPKPWFLLNKASPLNAAQYATYTKLVADQNALSTHLQSFCSSANLMCAPDLLPSLEKHTGDIHFTTYGNKNFTNYGTNEPGIGVNTFKNYSEDASVNSFRRYGRGSPRDNKFDNYAPDGNVIDQSFNSYSTNTPGGSGQFTNYAPNTNVPDLRFTAYSDQGTGGEQEFKTYLEQGNSGGQSFKSYGKNGNGADSKFTSYGNETNVAASTFKNYGQNANGENQNFTSYSTNGNNPQNNFKNYGVGGNGPSETFTNYRDESNVGDDKFSNYVKDANAGEANFTNYGQSFNEGTDVFITYGKGGNDPHINFKTYGVNNTFKDYVKDTATFSNYHNKTSQDLASLSEVNGGKKVNNRWIEPGKFFREKMLKSGTIMPMPDIKDKMPKRSFLPRAIAAKLPFSTSKIDELKKIFHAANDSQVAKMIGDALSECERAPSPGETKQCVNSAEDMIDFATSVLGRNVVVRTTENTNGSKGNIMIGSIKGINGGKVTKSVSCHQTLYPSLLYYCHSVPKVRVYEADILDPNSKAKINHGVAICHVDTSSWGPRHGAFIALGSGPGKIEVCHWIFENDMTWATAD</sequence>
<name>GP2_SOLLC</name>
<organism>
    <name type="scientific">Solanum lycopersicum</name>
    <name type="common">Tomato</name>
    <name type="synonym">Lycopersicon esculentum</name>
    <dbReference type="NCBI Taxonomy" id="4081"/>
    <lineage>
        <taxon>Eukaryota</taxon>
        <taxon>Viridiplantae</taxon>
        <taxon>Streptophyta</taxon>
        <taxon>Embryophyta</taxon>
        <taxon>Tracheophyta</taxon>
        <taxon>Spermatophyta</taxon>
        <taxon>Magnoliopsida</taxon>
        <taxon>eudicotyledons</taxon>
        <taxon>Gunneridae</taxon>
        <taxon>Pentapetalae</taxon>
        <taxon>asterids</taxon>
        <taxon>lamiids</taxon>
        <taxon>Solanales</taxon>
        <taxon>Solanaceae</taxon>
        <taxon>Solanoideae</taxon>
        <taxon>Solaneae</taxon>
        <taxon>Solanum</taxon>
        <taxon>Solanum subgen. Lycopersicon</taxon>
    </lineage>
</organism>
<accession>P93217</accession>